<protein>
    <recommendedName>
        <fullName evidence="5">Alpha-ketoglutarate semialdehyde dehydrogenase</fullName>
        <shortName evidence="5">KGSADH</shortName>
        <ecNumber evidence="3">1.2.1.26</ecNumber>
    </recommendedName>
</protein>
<sequence>MTDPSKNYVNGEWVTSETGETTEVTNPANPSEVVAAYQHSNENDAAAAVDAAVAAEDEWRNTPGPERGRILREAGTLLAQRKDELTEILTAEEGKARPEAAGEVQRAIDIFHYFSSKAADLGGTKKGASGPNTNLYTRQEPVGVAALITPWNYPIAIPAWKLAPALAAGNTVVLKPASIAPGVVIEIARALDEAGLPDGVLNVVTGPGSSVGSEFIGNEGTDLVSFTGSSQVGEMVYEQATDAGKRVQTELGGKNPTLVADSANPAEAADIVANGGFGTTGQSCTACSRAIVHEDVYDDFVAELVDRAESLDVGPGTDHEMGPQVSESELSSTLEYIDIAEAEGATLVAGGGVPEGEAVETGHFVEPTVFTDVDPDMRIAQEEVFGPVVAVIEVSDFDEGLAVANDVDYGLSASIVTDDHTEANRFVDEVEAGVVKVNDKTTGLELHVPFGGFKRSSSETWREQGDAGLDFYTIEKTVYDSY</sequence>
<organism>
    <name type="scientific">Haloferax volcanii (strain ATCC 29605 / DSM 3757 / JCM 8879 / NBRC 14742 / NCIMB 2012 / VKM B-1768 / DS2)</name>
    <name type="common">Halobacterium volcanii</name>
    <dbReference type="NCBI Taxonomy" id="309800"/>
    <lineage>
        <taxon>Archaea</taxon>
        <taxon>Methanobacteriati</taxon>
        <taxon>Methanobacteriota</taxon>
        <taxon>Stenosarchaea group</taxon>
        <taxon>Halobacteria</taxon>
        <taxon>Halobacteriales</taxon>
        <taxon>Haloferacaceae</taxon>
        <taxon>Haloferax</taxon>
    </lineage>
</organism>
<accession>D4GP41</accession>
<comment type="function">
    <text evidence="3">Alpha-ketoglutarate semialdehyde dehydrogenase involved in the degradation of D-xylose, a major component of hemicelluloses such as xylan. Catalyzes the fifth reaction in the xylose utilization pathway through dehydratation of alpha-ketoglutarate semialdehyde (2,5-dioxopentanoate) into alpha-ketoglutarate.</text>
</comment>
<comment type="catalytic activity">
    <reaction evidence="3">
        <text>2,5-dioxopentanoate + NADP(+) + H2O = 2-oxoglutarate + NADPH + 2 H(+)</text>
        <dbReference type="Rhea" id="RHEA:11296"/>
        <dbReference type="ChEBI" id="CHEBI:15377"/>
        <dbReference type="ChEBI" id="CHEBI:15378"/>
        <dbReference type="ChEBI" id="CHEBI:16810"/>
        <dbReference type="ChEBI" id="CHEBI:57783"/>
        <dbReference type="ChEBI" id="CHEBI:58136"/>
        <dbReference type="ChEBI" id="CHEBI:58349"/>
        <dbReference type="EC" id="1.2.1.26"/>
    </reaction>
</comment>
<comment type="biophysicochemical properties">
    <kinetics>
        <KM evidence="3">0.03 mM for NADP(+)</KM>
        <KM evidence="3">2.6 mM for NAD(+)</KM>
        <KM evidence="3">1.16 mM for glutaraldehyde</KM>
        <KM evidence="3">6.2 mM for succinate semialdehyde</KM>
    </kinetics>
</comment>
<comment type="pathway">
    <text evidence="3">Carbohydrate metabolism; D-xylose degradation.</text>
</comment>
<comment type="subunit">
    <text evidence="3">Homotetramer.</text>
</comment>
<comment type="induction">
    <text evidence="3 4">Transcriptionally up-regulated by both L-arabinose and D-xylose via the pentose-specific regulator XacR (PubMed:19584053, PubMed:25141768). Expression is repressed by glucose (PubMed:19584053).</text>
</comment>
<comment type="disruption phenotype">
    <text evidence="3">Impairs growth on D-xylose as sole energy and carbon substrate.</text>
</comment>
<comment type="similarity">
    <text evidence="7">Belongs to the aldehyde dehydrogenase family.</text>
</comment>
<proteinExistence type="evidence at protein level"/>
<keyword id="KW-0119">Carbohydrate metabolism</keyword>
<keyword id="KW-0903">Direct protein sequencing</keyword>
<keyword id="KW-0521">NADP</keyword>
<keyword id="KW-0560">Oxidoreductase</keyword>
<keyword id="KW-0614">Plasmid</keyword>
<keyword id="KW-1185">Reference proteome</keyword>
<feature type="chain" id="PRO_0000428799" description="Alpha-ketoglutarate semialdehyde dehydrogenase">
    <location>
        <begin position="1"/>
        <end position="482"/>
    </location>
</feature>
<feature type="region of interest" description="Disordered" evidence="2">
    <location>
        <begin position="1"/>
        <end position="28"/>
    </location>
</feature>
<feature type="compositionally biased region" description="Low complexity" evidence="2">
    <location>
        <begin position="11"/>
        <end position="25"/>
    </location>
</feature>
<feature type="active site" evidence="1">
    <location>
        <position position="284"/>
    </location>
</feature>
<reference key="1">
    <citation type="journal article" date="2010" name="PLoS ONE">
        <title>The complete genome sequence of Haloferax volcanii DS2, a model archaeon.</title>
        <authorList>
            <person name="Hartman A.L."/>
            <person name="Norais C."/>
            <person name="Badger J.H."/>
            <person name="Delmas S."/>
            <person name="Haldenby S."/>
            <person name="Madupu R."/>
            <person name="Robinson J."/>
            <person name="Khouri H."/>
            <person name="Ren Q."/>
            <person name="Lowe T.M."/>
            <person name="Maupin-Furlow J."/>
            <person name="Pohlschroder M."/>
            <person name="Daniels C."/>
            <person name="Pfeiffer F."/>
            <person name="Allers T."/>
            <person name="Eisen J.A."/>
        </authorList>
    </citation>
    <scope>NUCLEOTIDE SEQUENCE [LARGE SCALE GENOMIC DNA]</scope>
    <source>
        <strain>ATCC 29605 / DSM 3757 / JCM 8879 / NBRC 14742 / NCIMB 2012 / VKM B-1768 / DS2</strain>
    </source>
</reference>
<reference key="2">
    <citation type="journal article" date="2014" name="PLoS Genet.">
        <title>Phylogenetically driven sequencing of extremely halophilic archaea reveals strategies for static and dynamic osmo-response.</title>
        <authorList>
            <person name="Becker E.A."/>
            <person name="Seitzer P.M."/>
            <person name="Tritt A."/>
            <person name="Larsen D."/>
            <person name="Krusor M."/>
            <person name="Yao A.I."/>
            <person name="Wu D."/>
            <person name="Madern D."/>
            <person name="Eisen J.A."/>
            <person name="Darling A.E."/>
            <person name="Facciotti M.T."/>
        </authorList>
    </citation>
    <scope>NUCLEOTIDE SEQUENCE [LARGE SCALE GENOMIC DNA]</scope>
    <source>
        <strain>ATCC 29605 / DSM 3757 / JCM 8879 / NBRC 14742 / NCIMB 2012 / VKM B-1768 / DS2</strain>
    </source>
</reference>
<reference key="3">
    <citation type="journal article" date="2009" name="J. Biol. Chem.">
        <title>D-xylose degradation pathway in the halophilic archaeon Haloferax volcanii.</title>
        <authorList>
            <person name="Johnsen U."/>
            <person name="Dambeck M."/>
            <person name="Zaiss H."/>
            <person name="Fuhrer T."/>
            <person name="Soppa J."/>
            <person name="Sauer U."/>
            <person name="Schonheit P."/>
        </authorList>
    </citation>
    <scope>PROTEIN SEQUENCE OF 1-19</scope>
    <scope>SUBUNIT</scope>
    <scope>FUNCTION</scope>
    <scope>CATALYTIC ACTIVITY</scope>
    <scope>BIOPHYSICOCHEMICAL PROPERTIES</scope>
    <scope>INDUCTION</scope>
    <scope>DISRUPTION PHENOTYPE</scope>
    <scope>PATHWAY</scope>
    <source>
        <strain>DS2 / DS70</strain>
    </source>
</reference>
<reference key="4">
    <citation type="journal article" date="2015" name="Environ. Microbiol.">
        <title>XacR - a novel transcriptional regulator of D-xylose and L-arabinose catabolism in the haloarchaeon Haloferax volcanii.</title>
        <authorList>
            <person name="Johnsen U."/>
            <person name="Sutter J.M."/>
            <person name="Schulz A.C."/>
            <person name="Taestensen J.B."/>
            <person name="Schoenheit P."/>
        </authorList>
    </citation>
    <scope>INDUCTION</scope>
</reference>
<geneLocation type="plasmid">
    <name>pHV3</name>
</geneLocation>
<name>KGSDH_HALVD</name>
<dbReference type="EC" id="1.2.1.26" evidence="3"/>
<dbReference type="EMBL" id="CP001953">
    <property type="protein sequence ID" value="ADE01373.1"/>
    <property type="molecule type" value="Genomic_DNA"/>
</dbReference>
<dbReference type="EMBL" id="AOHU01000021">
    <property type="protein sequence ID" value="ELY36792.1"/>
    <property type="molecule type" value="Genomic_DNA"/>
</dbReference>
<dbReference type="RefSeq" id="WP_004041115.1">
    <property type="nucleotide sequence ID" value="NC_013964.1"/>
</dbReference>
<dbReference type="SMR" id="D4GP41"/>
<dbReference type="PaxDb" id="309800-C498_01560"/>
<dbReference type="EnsemblBacteria" id="ADE01373">
    <property type="protein sequence ID" value="ADE01373"/>
    <property type="gene ID" value="HVO_B0039"/>
</dbReference>
<dbReference type="GeneID" id="8919187"/>
<dbReference type="KEGG" id="hvo:HVO_B0039"/>
<dbReference type="PATRIC" id="fig|309800.29.peg.297"/>
<dbReference type="eggNOG" id="arCOG01252">
    <property type="taxonomic scope" value="Archaea"/>
</dbReference>
<dbReference type="HOGENOM" id="CLU_005391_1_0_2"/>
<dbReference type="OrthoDB" id="6342at2157"/>
<dbReference type="BioCyc" id="MetaCyc:MONOMER-16377"/>
<dbReference type="SABIO-RK" id="D4GP41"/>
<dbReference type="UniPathway" id="UPA00810"/>
<dbReference type="Proteomes" id="UP000008243">
    <property type="component" value="Plasmid pHV3"/>
</dbReference>
<dbReference type="Proteomes" id="UP000011532">
    <property type="component" value="Unassembled WGS sequence"/>
</dbReference>
<dbReference type="GO" id="GO:0047533">
    <property type="term" value="F:2,5-dioxovalerate dehydrogenase (NADP+) activity"/>
    <property type="evidence" value="ECO:0007669"/>
    <property type="project" value="UniProtKB-EC"/>
</dbReference>
<dbReference type="GO" id="GO:0042843">
    <property type="term" value="P:D-xylose catabolic process"/>
    <property type="evidence" value="ECO:0007669"/>
    <property type="project" value="UniProtKB-UniPathway"/>
</dbReference>
<dbReference type="FunFam" id="3.40.605.10:FF:000007">
    <property type="entry name" value="NAD/NADP-dependent betaine aldehyde dehydrogenase"/>
    <property type="match status" value="1"/>
</dbReference>
<dbReference type="Gene3D" id="3.40.605.10">
    <property type="entry name" value="Aldehyde Dehydrogenase, Chain A, domain 1"/>
    <property type="match status" value="1"/>
</dbReference>
<dbReference type="Gene3D" id="3.40.309.10">
    <property type="entry name" value="Aldehyde Dehydrogenase, Chain A, domain 2"/>
    <property type="match status" value="1"/>
</dbReference>
<dbReference type="InterPro" id="IPR016161">
    <property type="entry name" value="Ald_DH/histidinol_DH"/>
</dbReference>
<dbReference type="InterPro" id="IPR016163">
    <property type="entry name" value="Ald_DH_C"/>
</dbReference>
<dbReference type="InterPro" id="IPR016160">
    <property type="entry name" value="Ald_DH_CS_CYS"/>
</dbReference>
<dbReference type="InterPro" id="IPR016162">
    <property type="entry name" value="Ald_DH_N"/>
</dbReference>
<dbReference type="InterPro" id="IPR015590">
    <property type="entry name" value="Aldehyde_DH_dom"/>
</dbReference>
<dbReference type="PANTHER" id="PTHR11699">
    <property type="entry name" value="ALDEHYDE DEHYDROGENASE-RELATED"/>
    <property type="match status" value="1"/>
</dbReference>
<dbReference type="Pfam" id="PF00171">
    <property type="entry name" value="Aldedh"/>
    <property type="match status" value="1"/>
</dbReference>
<dbReference type="SUPFAM" id="SSF53720">
    <property type="entry name" value="ALDH-like"/>
    <property type="match status" value="1"/>
</dbReference>
<dbReference type="PROSITE" id="PS00070">
    <property type="entry name" value="ALDEHYDE_DEHYDR_CYS"/>
    <property type="match status" value="1"/>
</dbReference>
<evidence type="ECO:0000255" key="1">
    <source>
        <dbReference type="PROSITE-ProRule" id="PRU10008"/>
    </source>
</evidence>
<evidence type="ECO:0000256" key="2">
    <source>
        <dbReference type="SAM" id="MobiDB-lite"/>
    </source>
</evidence>
<evidence type="ECO:0000269" key="3">
    <source>
    </source>
</evidence>
<evidence type="ECO:0000269" key="4">
    <source>
    </source>
</evidence>
<evidence type="ECO:0000303" key="5">
    <source>
    </source>
</evidence>
<evidence type="ECO:0000303" key="6">
    <source>
    </source>
</evidence>
<evidence type="ECO:0000305" key="7"/>
<gene>
    <name evidence="6" type="primary">xacF</name>
    <name type="ordered locus">HVO_B0039</name>
    <name type="ORF">C498_01560</name>
</gene>